<organism>
    <name type="scientific">Pasteurella multocida (strain Pm70)</name>
    <dbReference type="NCBI Taxonomy" id="272843"/>
    <lineage>
        <taxon>Bacteria</taxon>
        <taxon>Pseudomonadati</taxon>
        <taxon>Pseudomonadota</taxon>
        <taxon>Gammaproteobacteria</taxon>
        <taxon>Pasteurellales</taxon>
        <taxon>Pasteurellaceae</taxon>
        <taxon>Pasteurella</taxon>
    </lineage>
</organism>
<feature type="chain" id="PRO_0000107980" description="HTH-type transcriptional repressor PurR">
    <location>
        <begin position="1"/>
        <end position="334"/>
    </location>
</feature>
<feature type="domain" description="HTH lacI-type" evidence="1">
    <location>
        <begin position="2"/>
        <end position="56"/>
    </location>
</feature>
<feature type="DNA-binding region" description="H-T-H motif" evidence="1">
    <location>
        <begin position="4"/>
        <end position="23"/>
    </location>
</feature>
<feature type="DNA-binding region" evidence="1">
    <location>
        <begin position="48"/>
        <end position="56"/>
    </location>
</feature>
<feature type="binding site" evidence="1">
    <location>
        <position position="73"/>
    </location>
    <ligand>
        <name>hypoxanthine</name>
        <dbReference type="ChEBI" id="CHEBI:17368"/>
    </ligand>
</feature>
<feature type="binding site" evidence="1">
    <location>
        <position position="189"/>
    </location>
    <ligand>
        <name>hypoxanthine</name>
        <dbReference type="ChEBI" id="CHEBI:17368"/>
    </ligand>
</feature>
<feature type="binding site" evidence="1">
    <location>
        <position position="191"/>
    </location>
    <ligand>
        <name>hypoxanthine</name>
        <dbReference type="ChEBI" id="CHEBI:17368"/>
    </ligand>
</feature>
<feature type="binding site" evidence="1">
    <location>
        <position position="220"/>
    </location>
    <ligand>
        <name>hypoxanthine</name>
        <dbReference type="ChEBI" id="CHEBI:17368"/>
    </ligand>
</feature>
<feature type="binding site" evidence="1">
    <location>
        <position position="274"/>
    </location>
    <ligand>
        <name>hypoxanthine</name>
        <dbReference type="ChEBI" id="CHEBI:17368"/>
    </ligand>
</feature>
<keyword id="KW-0238">DNA-binding</keyword>
<keyword id="KW-0658">Purine biosynthesis</keyword>
<keyword id="KW-1185">Reference proteome</keyword>
<keyword id="KW-0678">Repressor</keyword>
<keyword id="KW-0804">Transcription</keyword>
<keyword id="KW-0805">Transcription regulation</keyword>
<accession>Q9CN88</accession>
<proteinExistence type="inferred from homology"/>
<gene>
    <name evidence="1" type="primary">purR</name>
    <name type="ordered locus">PM0547</name>
</gene>
<sequence>MATIKDVAKMAGVSTTTVSHVINKTRFVAAETEKLVLQAIQELNYSPSAVARSLKVNTTKSIGMIVTSSEAPYFAEIIHAVEEHCYRQGYSLFLCNTQNNVEKIKNHLEMLIKKRVDGILVMCAEYTQDSLDLLANFTSLPLVVMDWGPDNKHTDIIQDHSFEGGYLATKYLIDHGHKDIGIIAGELTKTTAKTRYEGFIKAMNEAGLKINPDWVMEGFFEPEDGYECMNKILAQDTLPTAVFCCNDVMALGAISAIGEKGLRVPEDISIIGYDNIHASRFYSPPLTTIHQSKSRLGARAVTLLFERINEKSEERAVIEMHPELVIRKSVKSRL</sequence>
<reference key="1">
    <citation type="journal article" date="2001" name="Proc. Natl. Acad. Sci. U.S.A.">
        <title>Complete genomic sequence of Pasteurella multocida Pm70.</title>
        <authorList>
            <person name="May B.J."/>
            <person name="Zhang Q."/>
            <person name="Li L.L."/>
            <person name="Paustian M.L."/>
            <person name="Whittam T.S."/>
            <person name="Kapur V."/>
        </authorList>
    </citation>
    <scope>NUCLEOTIDE SEQUENCE [LARGE SCALE GENOMIC DNA]</scope>
    <source>
        <strain>Pm70</strain>
    </source>
</reference>
<dbReference type="EMBL" id="AE004439">
    <property type="protein sequence ID" value="AAK02631.1"/>
    <property type="molecule type" value="Genomic_DNA"/>
</dbReference>
<dbReference type="RefSeq" id="WP_005722015.1">
    <property type="nucleotide sequence ID" value="NC_002663.1"/>
</dbReference>
<dbReference type="SMR" id="Q9CN88"/>
<dbReference type="STRING" id="272843.PM0547"/>
<dbReference type="EnsemblBacteria" id="AAK02631">
    <property type="protein sequence ID" value="AAK02631"/>
    <property type="gene ID" value="PM0547"/>
</dbReference>
<dbReference type="GeneID" id="77208104"/>
<dbReference type="KEGG" id="pmu:PM0547"/>
<dbReference type="HOGENOM" id="CLU_037628_6_2_6"/>
<dbReference type="OrthoDB" id="9798934at2"/>
<dbReference type="UniPathway" id="UPA00488"/>
<dbReference type="Proteomes" id="UP000000809">
    <property type="component" value="Chromosome"/>
</dbReference>
<dbReference type="GO" id="GO:0003700">
    <property type="term" value="F:DNA-binding transcription factor activity"/>
    <property type="evidence" value="ECO:0007669"/>
    <property type="project" value="TreeGrafter"/>
</dbReference>
<dbReference type="GO" id="GO:0000976">
    <property type="term" value="F:transcription cis-regulatory region binding"/>
    <property type="evidence" value="ECO:0007669"/>
    <property type="project" value="TreeGrafter"/>
</dbReference>
<dbReference type="GO" id="GO:0045892">
    <property type="term" value="P:negative regulation of DNA-templated transcription"/>
    <property type="evidence" value="ECO:0007669"/>
    <property type="project" value="UniProtKB-UniRule"/>
</dbReference>
<dbReference type="GO" id="GO:0006164">
    <property type="term" value="P:purine nucleotide biosynthetic process"/>
    <property type="evidence" value="ECO:0007669"/>
    <property type="project" value="UniProtKB-UniPathway"/>
</dbReference>
<dbReference type="CDD" id="cd01392">
    <property type="entry name" value="HTH_LacI"/>
    <property type="match status" value="1"/>
</dbReference>
<dbReference type="CDD" id="cd06275">
    <property type="entry name" value="PBP1_PurR"/>
    <property type="match status" value="1"/>
</dbReference>
<dbReference type="FunFam" id="1.10.260.40:FF:000002">
    <property type="entry name" value="HTH-type transcriptional repressor PurR"/>
    <property type="match status" value="1"/>
</dbReference>
<dbReference type="Gene3D" id="3.40.50.2300">
    <property type="match status" value="2"/>
</dbReference>
<dbReference type="Gene3D" id="1.10.260.40">
    <property type="entry name" value="lambda repressor-like DNA-binding domains"/>
    <property type="match status" value="1"/>
</dbReference>
<dbReference type="HAMAP" id="MF_01277">
    <property type="entry name" value="HTH_type_PurR"/>
    <property type="match status" value="1"/>
</dbReference>
<dbReference type="InterPro" id="IPR000843">
    <property type="entry name" value="HTH_LacI"/>
</dbReference>
<dbReference type="InterPro" id="IPR046335">
    <property type="entry name" value="LacI/GalR-like_sensor"/>
</dbReference>
<dbReference type="InterPro" id="IPR010982">
    <property type="entry name" value="Lambda_DNA-bd_dom_sf"/>
</dbReference>
<dbReference type="InterPro" id="IPR028082">
    <property type="entry name" value="Peripla_BP_I"/>
</dbReference>
<dbReference type="InterPro" id="IPR023588">
    <property type="entry name" value="Tscrpt_reg_HTH_PurR"/>
</dbReference>
<dbReference type="NCBIfam" id="NF007979">
    <property type="entry name" value="PRK10703.1"/>
    <property type="match status" value="1"/>
</dbReference>
<dbReference type="PANTHER" id="PTHR30146:SF148">
    <property type="entry name" value="HTH-TYPE TRANSCRIPTIONAL REPRESSOR PURR-RELATED"/>
    <property type="match status" value="1"/>
</dbReference>
<dbReference type="PANTHER" id="PTHR30146">
    <property type="entry name" value="LACI-RELATED TRANSCRIPTIONAL REPRESSOR"/>
    <property type="match status" value="1"/>
</dbReference>
<dbReference type="Pfam" id="PF00356">
    <property type="entry name" value="LacI"/>
    <property type="match status" value="1"/>
</dbReference>
<dbReference type="Pfam" id="PF13377">
    <property type="entry name" value="Peripla_BP_3"/>
    <property type="match status" value="1"/>
</dbReference>
<dbReference type="PRINTS" id="PR00036">
    <property type="entry name" value="HTHLACI"/>
</dbReference>
<dbReference type="SMART" id="SM00354">
    <property type="entry name" value="HTH_LACI"/>
    <property type="match status" value="1"/>
</dbReference>
<dbReference type="SUPFAM" id="SSF47413">
    <property type="entry name" value="lambda repressor-like DNA-binding domains"/>
    <property type="match status" value="1"/>
</dbReference>
<dbReference type="SUPFAM" id="SSF53822">
    <property type="entry name" value="Periplasmic binding protein-like I"/>
    <property type="match status" value="1"/>
</dbReference>
<dbReference type="PROSITE" id="PS00356">
    <property type="entry name" value="HTH_LACI_1"/>
    <property type="match status" value="1"/>
</dbReference>
<dbReference type="PROSITE" id="PS50932">
    <property type="entry name" value="HTH_LACI_2"/>
    <property type="match status" value="1"/>
</dbReference>
<comment type="function">
    <text evidence="1">Is the main repressor of the genes involved in the de novo synthesis of purine nucleotides, regulating purB, purC, purEK, purF, purHD, purL, purMN and guaBA expression. PurR is allosterically activated to bind its cognate DNA by binding the purine corepressors, hypoxanthine or guanine, thereby effecting transcription repression.</text>
</comment>
<comment type="pathway">
    <text>Purine metabolism; purine nucleotide biosynthesis [regulation].</text>
</comment>
<comment type="subunit">
    <text evidence="1">Homodimer.</text>
</comment>
<comment type="domain">
    <text evidence="1">Consists of two structural and functional domains: an N-terminal DNA-binding domain, approximately the first 60 residues, and a larger C-terminal domain, approximately 280 residues, which imparts the function of corepressor binding and oligomerization.</text>
</comment>
<name>PURR_PASMU</name>
<evidence type="ECO:0000255" key="1">
    <source>
        <dbReference type="HAMAP-Rule" id="MF_01277"/>
    </source>
</evidence>
<protein>
    <recommendedName>
        <fullName evidence="1">HTH-type transcriptional repressor PurR</fullName>
    </recommendedName>
    <alternativeName>
        <fullName evidence="1">Pur regulon repressor</fullName>
    </alternativeName>
    <alternativeName>
        <fullName evidence="1">Purine nucleotide synthesis repressor</fullName>
    </alternativeName>
</protein>